<gene>
    <name evidence="1" type="primary">rpoY</name>
    <name type="ordered locus">BPUM_1350</name>
</gene>
<keyword id="KW-0240">DNA-directed RNA polymerase</keyword>
<keyword id="KW-0548">Nucleotidyltransferase</keyword>
<keyword id="KW-0804">Transcription</keyword>
<keyword id="KW-0808">Transferase</keyword>
<organism>
    <name type="scientific">Bacillus pumilus (strain SAFR-032)</name>
    <dbReference type="NCBI Taxonomy" id="315750"/>
    <lineage>
        <taxon>Bacteria</taxon>
        <taxon>Bacillati</taxon>
        <taxon>Bacillota</taxon>
        <taxon>Bacilli</taxon>
        <taxon>Bacillales</taxon>
        <taxon>Bacillaceae</taxon>
        <taxon>Bacillus</taxon>
    </lineage>
</organism>
<dbReference type="EC" id="2.7.7.6" evidence="1"/>
<dbReference type="EMBL" id="CP000813">
    <property type="protein sequence ID" value="ABV62033.1"/>
    <property type="molecule type" value="Genomic_DNA"/>
</dbReference>
<dbReference type="RefSeq" id="WP_003211882.1">
    <property type="nucleotide sequence ID" value="NZ_VEIS01000003.1"/>
</dbReference>
<dbReference type="SMR" id="A8FCR6"/>
<dbReference type="STRING" id="315750.BPUM_1350"/>
<dbReference type="GeneID" id="5620613"/>
<dbReference type="KEGG" id="bpu:BPUM_1350"/>
<dbReference type="eggNOG" id="COG5503">
    <property type="taxonomic scope" value="Bacteria"/>
</dbReference>
<dbReference type="HOGENOM" id="CLU_187518_1_0_9"/>
<dbReference type="OrthoDB" id="2147503at2"/>
<dbReference type="Proteomes" id="UP000001355">
    <property type="component" value="Chromosome"/>
</dbReference>
<dbReference type="GO" id="GO:0000428">
    <property type="term" value="C:DNA-directed RNA polymerase complex"/>
    <property type="evidence" value="ECO:0007669"/>
    <property type="project" value="UniProtKB-KW"/>
</dbReference>
<dbReference type="GO" id="GO:0003677">
    <property type="term" value="F:DNA binding"/>
    <property type="evidence" value="ECO:0007669"/>
    <property type="project" value="UniProtKB-UniRule"/>
</dbReference>
<dbReference type="GO" id="GO:0003899">
    <property type="term" value="F:DNA-directed RNA polymerase activity"/>
    <property type="evidence" value="ECO:0007669"/>
    <property type="project" value="UniProtKB-UniRule"/>
</dbReference>
<dbReference type="GO" id="GO:0006351">
    <property type="term" value="P:DNA-templated transcription"/>
    <property type="evidence" value="ECO:0007669"/>
    <property type="project" value="UniProtKB-UniRule"/>
</dbReference>
<dbReference type="Gene3D" id="3.10.20.730">
    <property type="entry name" value="RNAP, epsilon subunit-like"/>
    <property type="match status" value="1"/>
</dbReference>
<dbReference type="HAMAP" id="MF_01553">
    <property type="entry name" value="RNApol_bact_RpoY"/>
    <property type="match status" value="1"/>
</dbReference>
<dbReference type="InterPro" id="IPR009907">
    <property type="entry name" value="RpoY"/>
</dbReference>
<dbReference type="NCBIfam" id="NF010188">
    <property type="entry name" value="PRK13667.1"/>
    <property type="match status" value="1"/>
</dbReference>
<dbReference type="Pfam" id="PF07288">
    <property type="entry name" value="RpoY"/>
    <property type="match status" value="1"/>
</dbReference>
<name>RPOY_BACP2</name>
<feature type="chain" id="PRO_1000068864" description="DNA-directed RNA polymerase subunit epsilon">
    <location>
        <begin position="1"/>
        <end position="69"/>
    </location>
</feature>
<protein>
    <recommendedName>
        <fullName evidence="1">DNA-directed RNA polymerase subunit epsilon</fullName>
        <shortName evidence="1">RNAP epsilon subunit</shortName>
        <ecNumber evidence="1">2.7.7.6</ecNumber>
    </recommendedName>
    <alternativeName>
        <fullName evidence="1">RNA polymerase epsilon subunit</fullName>
    </alternativeName>
    <alternativeName>
        <fullName evidence="1">Transcriptase subunit epsilon</fullName>
    </alternativeName>
</protein>
<sequence>MIYKVFFQASTTEVPVREHTDSLYVEAVSERDVRDKLKKHSYNIEFIQPVDGAFLDYERESENFKVLEL</sequence>
<comment type="function">
    <text evidence="1">A non-essential component of RNA polymerase (RNAP).</text>
</comment>
<comment type="catalytic activity">
    <reaction evidence="1">
        <text>RNA(n) + a ribonucleoside 5'-triphosphate = RNA(n+1) + diphosphate</text>
        <dbReference type="Rhea" id="RHEA:21248"/>
        <dbReference type="Rhea" id="RHEA-COMP:14527"/>
        <dbReference type="Rhea" id="RHEA-COMP:17342"/>
        <dbReference type="ChEBI" id="CHEBI:33019"/>
        <dbReference type="ChEBI" id="CHEBI:61557"/>
        <dbReference type="ChEBI" id="CHEBI:140395"/>
        <dbReference type="EC" id="2.7.7.6"/>
    </reaction>
</comment>
<comment type="subunit">
    <text evidence="1">RNAP is composed of a core of 2 alpha, a beta and a beta' subunit. The core is associated with a delta subunit, and at least one of epsilon or omega. When a sigma factor is associated with the core the holoenzyme is formed, which can initiate transcription.</text>
</comment>
<comment type="similarity">
    <text evidence="1">Belongs to the RNA polymerase subunit epsilon family.</text>
</comment>
<evidence type="ECO:0000255" key="1">
    <source>
        <dbReference type="HAMAP-Rule" id="MF_01553"/>
    </source>
</evidence>
<proteinExistence type="inferred from homology"/>
<accession>A8FCR6</accession>
<reference key="1">
    <citation type="journal article" date="2007" name="PLoS ONE">
        <title>Paradoxical DNA repair and peroxide resistance gene conservation in Bacillus pumilus SAFR-032.</title>
        <authorList>
            <person name="Gioia J."/>
            <person name="Yerrapragada S."/>
            <person name="Qin X."/>
            <person name="Jiang H."/>
            <person name="Igboeli O.C."/>
            <person name="Muzny D."/>
            <person name="Dugan-Rocha S."/>
            <person name="Ding Y."/>
            <person name="Hawes A."/>
            <person name="Liu W."/>
            <person name="Perez L."/>
            <person name="Kovar C."/>
            <person name="Dinh H."/>
            <person name="Lee S."/>
            <person name="Nazareth L."/>
            <person name="Blyth P."/>
            <person name="Holder M."/>
            <person name="Buhay C."/>
            <person name="Tirumalai M.R."/>
            <person name="Liu Y."/>
            <person name="Dasgupta I."/>
            <person name="Bokhetache L."/>
            <person name="Fujita M."/>
            <person name="Karouia F."/>
            <person name="Eswara Moorthy P."/>
            <person name="Siefert J."/>
            <person name="Uzman A."/>
            <person name="Buzumbo P."/>
            <person name="Verma A."/>
            <person name="Zwiya H."/>
            <person name="McWilliams B.D."/>
            <person name="Olowu A."/>
            <person name="Clinkenbeard K.D."/>
            <person name="Newcombe D."/>
            <person name="Golebiewski L."/>
            <person name="Petrosino J.F."/>
            <person name="Nicholson W.L."/>
            <person name="Fox G.E."/>
            <person name="Venkateswaran K."/>
            <person name="Highlander S.K."/>
            <person name="Weinstock G.M."/>
        </authorList>
    </citation>
    <scope>NUCLEOTIDE SEQUENCE [LARGE SCALE GENOMIC DNA]</scope>
    <source>
        <strain>SAFR-032</strain>
    </source>
</reference>